<evidence type="ECO:0000255" key="1">
    <source>
        <dbReference type="HAMAP-Rule" id="MF_00006"/>
    </source>
</evidence>
<organism>
    <name type="scientific">Streptomyces griseus subsp. griseus (strain JCM 4626 / CBS 651.72 / NBRC 13350 / KCC S-0626 / ISP 5235)</name>
    <dbReference type="NCBI Taxonomy" id="455632"/>
    <lineage>
        <taxon>Bacteria</taxon>
        <taxon>Bacillati</taxon>
        <taxon>Actinomycetota</taxon>
        <taxon>Actinomycetes</taxon>
        <taxon>Kitasatosporales</taxon>
        <taxon>Streptomycetaceae</taxon>
        <taxon>Streptomyces</taxon>
    </lineage>
</organism>
<dbReference type="EC" id="4.3.2.1" evidence="1"/>
<dbReference type="EMBL" id="AP009493">
    <property type="protein sequence ID" value="BAG22796.1"/>
    <property type="molecule type" value="Genomic_DNA"/>
</dbReference>
<dbReference type="RefSeq" id="WP_003970275.1">
    <property type="nucleotide sequence ID" value="NC_010572.1"/>
</dbReference>
<dbReference type="SMR" id="B1W3B4"/>
<dbReference type="KEGG" id="sgr:SGR_5967"/>
<dbReference type="eggNOG" id="COG0165">
    <property type="taxonomic scope" value="Bacteria"/>
</dbReference>
<dbReference type="HOGENOM" id="CLU_027272_2_3_11"/>
<dbReference type="UniPathway" id="UPA00068">
    <property type="reaction ID" value="UER00114"/>
</dbReference>
<dbReference type="Proteomes" id="UP000001685">
    <property type="component" value="Chromosome"/>
</dbReference>
<dbReference type="GO" id="GO:0005829">
    <property type="term" value="C:cytosol"/>
    <property type="evidence" value="ECO:0007669"/>
    <property type="project" value="TreeGrafter"/>
</dbReference>
<dbReference type="GO" id="GO:0004056">
    <property type="term" value="F:argininosuccinate lyase activity"/>
    <property type="evidence" value="ECO:0007669"/>
    <property type="project" value="UniProtKB-UniRule"/>
</dbReference>
<dbReference type="GO" id="GO:0042450">
    <property type="term" value="P:arginine biosynthetic process via ornithine"/>
    <property type="evidence" value="ECO:0007669"/>
    <property type="project" value="InterPro"/>
</dbReference>
<dbReference type="GO" id="GO:0006526">
    <property type="term" value="P:L-arginine biosynthetic process"/>
    <property type="evidence" value="ECO:0007669"/>
    <property type="project" value="UniProtKB-UniRule"/>
</dbReference>
<dbReference type="CDD" id="cd01359">
    <property type="entry name" value="Argininosuccinate_lyase"/>
    <property type="match status" value="1"/>
</dbReference>
<dbReference type="FunFam" id="1.10.275.10:FF:000002">
    <property type="entry name" value="Argininosuccinate lyase"/>
    <property type="match status" value="1"/>
</dbReference>
<dbReference type="FunFam" id="1.10.40.30:FF:000001">
    <property type="entry name" value="Argininosuccinate lyase"/>
    <property type="match status" value="1"/>
</dbReference>
<dbReference type="FunFam" id="1.20.200.10:FF:000002">
    <property type="entry name" value="Argininosuccinate lyase"/>
    <property type="match status" value="1"/>
</dbReference>
<dbReference type="Gene3D" id="1.10.40.30">
    <property type="entry name" value="Fumarase/aspartase (C-terminal domain)"/>
    <property type="match status" value="1"/>
</dbReference>
<dbReference type="Gene3D" id="1.20.200.10">
    <property type="entry name" value="Fumarase/aspartase (Central domain)"/>
    <property type="match status" value="1"/>
</dbReference>
<dbReference type="Gene3D" id="1.10.275.10">
    <property type="entry name" value="Fumarase/aspartase (N-terminal domain)"/>
    <property type="match status" value="1"/>
</dbReference>
<dbReference type="HAMAP" id="MF_00006">
    <property type="entry name" value="Arg_succ_lyase"/>
    <property type="match status" value="1"/>
</dbReference>
<dbReference type="InterPro" id="IPR029419">
    <property type="entry name" value="Arg_succ_lyase_C"/>
</dbReference>
<dbReference type="InterPro" id="IPR009049">
    <property type="entry name" value="Argininosuccinate_lyase"/>
</dbReference>
<dbReference type="InterPro" id="IPR024083">
    <property type="entry name" value="Fumarase/histidase_N"/>
</dbReference>
<dbReference type="InterPro" id="IPR020557">
    <property type="entry name" value="Fumarate_lyase_CS"/>
</dbReference>
<dbReference type="InterPro" id="IPR000362">
    <property type="entry name" value="Fumarate_lyase_fam"/>
</dbReference>
<dbReference type="InterPro" id="IPR022761">
    <property type="entry name" value="Fumarate_lyase_N"/>
</dbReference>
<dbReference type="InterPro" id="IPR008948">
    <property type="entry name" value="L-Aspartase-like"/>
</dbReference>
<dbReference type="NCBIfam" id="TIGR00838">
    <property type="entry name" value="argH"/>
    <property type="match status" value="1"/>
</dbReference>
<dbReference type="PANTHER" id="PTHR43814">
    <property type="entry name" value="ARGININOSUCCINATE LYASE"/>
    <property type="match status" value="1"/>
</dbReference>
<dbReference type="PANTHER" id="PTHR43814:SF1">
    <property type="entry name" value="ARGININOSUCCINATE LYASE"/>
    <property type="match status" value="1"/>
</dbReference>
<dbReference type="Pfam" id="PF14698">
    <property type="entry name" value="ASL_C2"/>
    <property type="match status" value="1"/>
</dbReference>
<dbReference type="Pfam" id="PF00206">
    <property type="entry name" value="Lyase_1"/>
    <property type="match status" value="1"/>
</dbReference>
<dbReference type="PRINTS" id="PR00145">
    <property type="entry name" value="ARGSUCLYASE"/>
</dbReference>
<dbReference type="PRINTS" id="PR00149">
    <property type="entry name" value="FUMRATELYASE"/>
</dbReference>
<dbReference type="SUPFAM" id="SSF48557">
    <property type="entry name" value="L-aspartase-like"/>
    <property type="match status" value="1"/>
</dbReference>
<dbReference type="PROSITE" id="PS00163">
    <property type="entry name" value="FUMARATE_LYASES"/>
    <property type="match status" value="1"/>
</dbReference>
<reference key="1">
    <citation type="journal article" date="2008" name="J. Bacteriol.">
        <title>Genome sequence of the streptomycin-producing microorganism Streptomyces griseus IFO 13350.</title>
        <authorList>
            <person name="Ohnishi Y."/>
            <person name="Ishikawa J."/>
            <person name="Hara H."/>
            <person name="Suzuki H."/>
            <person name="Ikenoya M."/>
            <person name="Ikeda H."/>
            <person name="Yamashita A."/>
            <person name="Hattori M."/>
            <person name="Horinouchi S."/>
        </authorList>
    </citation>
    <scope>NUCLEOTIDE SEQUENCE [LARGE SCALE GENOMIC DNA]</scope>
    <source>
        <strain>JCM 4626 / CBS 651.72 / NBRC 13350 / KCC S-0626 / ISP 5235</strain>
    </source>
</reference>
<keyword id="KW-0028">Amino-acid biosynthesis</keyword>
<keyword id="KW-0055">Arginine biosynthesis</keyword>
<keyword id="KW-0963">Cytoplasm</keyword>
<keyword id="KW-0456">Lyase</keyword>
<proteinExistence type="inferred from homology"/>
<accession>B1W3B4</accession>
<feature type="chain" id="PRO_1000089119" description="Argininosuccinate lyase">
    <location>
        <begin position="1"/>
        <end position="475"/>
    </location>
</feature>
<sequence length="475" mass="51038">MSSNNGDVRLWGARFADGPAEALAKLSASVHFDWRLAPYDIAGSRAHARVLSKAGLLSEDELTRMLAGLDQLEADVADGSFTGTIADEDVHTALERGLLERLGADLGGKLRAGRSRNDQIATLFRMYLRDHARTIGGLIADLQSALVGLAEAHADVAMPGRTHLQHAQPVLFAHHVLAHVQSLSRDAERLRQWDERTAVSPYGSGALAGSSLGLDPQAVAADLGFERGSVANSIDGTASRDFVAEFAFITAMIGVNLSRIAEEVIIWNTKEFSFVTLHDAFSTGSSIMPQKKNPDIAELARGKSGRLIGNLTGLLATLKALPLAYNRDLQEDKEPVFDSCDQLEVLLPAFTGMMATLTVNRERMEELAPAGFSLATDIAEWLVKQGVPFRVAHEVAGACVKECERAGIELDQLTDEQFAEISEHLTPEVRTVLNVRGALASRDGRGGTAPSAVAVQLAEVKEDLAAQHAWATARP</sequence>
<name>ARLY_STRGG</name>
<protein>
    <recommendedName>
        <fullName evidence="1">Argininosuccinate lyase</fullName>
        <shortName evidence="1">ASAL</shortName>
        <ecNumber evidence="1">4.3.2.1</ecNumber>
    </recommendedName>
    <alternativeName>
        <fullName evidence="1">Arginosuccinase</fullName>
    </alternativeName>
</protein>
<comment type="catalytic activity">
    <reaction evidence="1">
        <text>2-(N(omega)-L-arginino)succinate = fumarate + L-arginine</text>
        <dbReference type="Rhea" id="RHEA:24020"/>
        <dbReference type="ChEBI" id="CHEBI:29806"/>
        <dbReference type="ChEBI" id="CHEBI:32682"/>
        <dbReference type="ChEBI" id="CHEBI:57472"/>
        <dbReference type="EC" id="4.3.2.1"/>
    </reaction>
</comment>
<comment type="pathway">
    <text evidence="1">Amino-acid biosynthesis; L-arginine biosynthesis; L-arginine from L-ornithine and carbamoyl phosphate: step 3/3.</text>
</comment>
<comment type="subcellular location">
    <subcellularLocation>
        <location evidence="1">Cytoplasm</location>
    </subcellularLocation>
</comment>
<comment type="similarity">
    <text evidence="1">Belongs to the lyase 1 family. Argininosuccinate lyase subfamily.</text>
</comment>
<gene>
    <name evidence="1" type="primary">argH</name>
    <name type="ordered locus">SGR_5967</name>
</gene>